<protein>
    <recommendedName>
        <fullName evidence="1">UvrABC system protein C</fullName>
        <shortName evidence="1">Protein UvrC</shortName>
    </recommendedName>
    <alternativeName>
        <fullName evidence="1">Excinuclease ABC subunit C</fullName>
    </alternativeName>
</protein>
<comment type="function">
    <text evidence="1">The UvrABC repair system catalyzes the recognition and processing of DNA lesions. UvrC both incises the 5' and 3' sides of the lesion. The N-terminal half is responsible for the 3' incision and the C-terminal half is responsible for the 5' incision.</text>
</comment>
<comment type="subunit">
    <text evidence="1">Interacts with UvrB in an incision complex.</text>
</comment>
<comment type="subcellular location">
    <subcellularLocation>
        <location evidence="1">Cytoplasm</location>
    </subcellularLocation>
</comment>
<comment type="similarity">
    <text evidence="1">Belongs to the UvrC family.</text>
</comment>
<accession>A1KIK9</accession>
<organism>
    <name type="scientific">Mycobacterium bovis (strain BCG / Pasteur 1173P2)</name>
    <dbReference type="NCBI Taxonomy" id="410289"/>
    <lineage>
        <taxon>Bacteria</taxon>
        <taxon>Bacillati</taxon>
        <taxon>Actinomycetota</taxon>
        <taxon>Actinomycetes</taxon>
        <taxon>Mycobacteriales</taxon>
        <taxon>Mycobacteriaceae</taxon>
        <taxon>Mycobacterium</taxon>
        <taxon>Mycobacterium tuberculosis complex</taxon>
    </lineage>
</organism>
<proteinExistence type="inferred from homology"/>
<name>UVRC_MYCBP</name>
<keyword id="KW-0963">Cytoplasm</keyword>
<keyword id="KW-0227">DNA damage</keyword>
<keyword id="KW-0228">DNA excision</keyword>
<keyword id="KW-0234">DNA repair</keyword>
<keyword id="KW-0267">Excision nuclease</keyword>
<keyword id="KW-0742">SOS response</keyword>
<evidence type="ECO:0000255" key="1">
    <source>
        <dbReference type="HAMAP-Rule" id="MF_00203"/>
    </source>
</evidence>
<sequence length="646" mass="71614">MPDPATYRPAPGSIPVEPGVYRFRDQHGRVIYVGKAKSLRSRLTSYFADVASLAPRTRQLVTTAAKVEWTVVGTEVEALQLEYTWIKEFDPRFNVRYRDDKSYPVLAVTLGEEFPRLMVYRGPRRKGVRYFGPYSHAWAIRETLDLLTRVFPARTCSAGVFKRHRQIDRPCLLGYIDKCSAPCIGRVDAAQHRQIVADFCDFLSGKTDRFARALEQQMNAAAEQLDFERAARLRDDLSALKRAMEKQAVVLGDGTDADVVAFADDELEAAVQVFHVRGGRVRGQRGWIVEKPGEPGDSGIQLVEQFLTQFYGDQAALDDAADESANPVPREVLVPCLPSNAEELASWLSGLRGSRVVLRVPRRGDKRALAETVHRNAEDALQQHKLKRASDFNARSAALQSIQDSLGLADAPLRIECVDVSHVQGTDVVGSLVVFEDGLPRKSDYRHFGIREAAGQGRSDDVACIAEVTRRRFLRHLRDQSDPDLLSPERKSRRFAYPPNLYVVDGGAPQVNAASAVIDELGVTDVAVIGLAKRLEEVWVPSEPDPIIMPRNSEGLYLLQRVRDEAHRFAITYHRSKRSTRMTASALDSVPGLGEHRRKALVTHFGSIARLKEATVDEITAVPGIGVATATAVHDALRPDSSGAAR</sequence>
<dbReference type="EMBL" id="AM408590">
    <property type="protein sequence ID" value="CAL71468.1"/>
    <property type="molecule type" value="Genomic_DNA"/>
</dbReference>
<dbReference type="RefSeq" id="WP_003407347.1">
    <property type="nucleotide sequence ID" value="NC_008769.1"/>
</dbReference>
<dbReference type="SMR" id="A1KIK9"/>
<dbReference type="GeneID" id="45425398"/>
<dbReference type="KEGG" id="mbb:BCG_1481"/>
<dbReference type="HOGENOM" id="CLU_014841_1_1_11"/>
<dbReference type="Proteomes" id="UP000001472">
    <property type="component" value="Chromosome"/>
</dbReference>
<dbReference type="GO" id="GO:0005737">
    <property type="term" value="C:cytoplasm"/>
    <property type="evidence" value="ECO:0007669"/>
    <property type="project" value="UniProtKB-SubCell"/>
</dbReference>
<dbReference type="GO" id="GO:0009380">
    <property type="term" value="C:excinuclease repair complex"/>
    <property type="evidence" value="ECO:0007669"/>
    <property type="project" value="InterPro"/>
</dbReference>
<dbReference type="GO" id="GO:0003677">
    <property type="term" value="F:DNA binding"/>
    <property type="evidence" value="ECO:0007669"/>
    <property type="project" value="UniProtKB-UniRule"/>
</dbReference>
<dbReference type="GO" id="GO:0009381">
    <property type="term" value="F:excinuclease ABC activity"/>
    <property type="evidence" value="ECO:0007669"/>
    <property type="project" value="UniProtKB-UniRule"/>
</dbReference>
<dbReference type="GO" id="GO:0006289">
    <property type="term" value="P:nucleotide-excision repair"/>
    <property type="evidence" value="ECO:0007669"/>
    <property type="project" value="UniProtKB-UniRule"/>
</dbReference>
<dbReference type="GO" id="GO:0009432">
    <property type="term" value="P:SOS response"/>
    <property type="evidence" value="ECO:0007669"/>
    <property type="project" value="UniProtKB-UniRule"/>
</dbReference>
<dbReference type="CDD" id="cd10434">
    <property type="entry name" value="GIY-YIG_UvrC_Cho"/>
    <property type="match status" value="1"/>
</dbReference>
<dbReference type="FunFam" id="1.10.150.20:FF:000005">
    <property type="entry name" value="UvrABC system protein C"/>
    <property type="match status" value="1"/>
</dbReference>
<dbReference type="FunFam" id="3.30.420.340:FF:000003">
    <property type="entry name" value="UvrABC system protein C"/>
    <property type="match status" value="1"/>
</dbReference>
<dbReference type="FunFam" id="3.40.1440.10:FF:000001">
    <property type="entry name" value="UvrABC system protein C"/>
    <property type="match status" value="1"/>
</dbReference>
<dbReference type="Gene3D" id="1.10.150.20">
    <property type="entry name" value="5' to 3' exonuclease, C-terminal subdomain"/>
    <property type="match status" value="1"/>
</dbReference>
<dbReference type="Gene3D" id="3.40.1440.10">
    <property type="entry name" value="GIY-YIG endonuclease"/>
    <property type="match status" value="1"/>
</dbReference>
<dbReference type="Gene3D" id="4.10.860.10">
    <property type="entry name" value="UVR domain"/>
    <property type="match status" value="1"/>
</dbReference>
<dbReference type="Gene3D" id="3.30.420.340">
    <property type="entry name" value="UvrC, RNAse H endonuclease domain"/>
    <property type="match status" value="1"/>
</dbReference>
<dbReference type="HAMAP" id="MF_00203">
    <property type="entry name" value="UvrC"/>
    <property type="match status" value="1"/>
</dbReference>
<dbReference type="InterPro" id="IPR000305">
    <property type="entry name" value="GIY-YIG_endonuc"/>
</dbReference>
<dbReference type="InterPro" id="IPR035901">
    <property type="entry name" value="GIY-YIG_endonuc_sf"/>
</dbReference>
<dbReference type="InterPro" id="IPR047296">
    <property type="entry name" value="GIY-YIG_UvrC_Cho"/>
</dbReference>
<dbReference type="InterPro" id="IPR003583">
    <property type="entry name" value="Hlx-hairpin-Hlx_DNA-bd_motif"/>
</dbReference>
<dbReference type="InterPro" id="IPR010994">
    <property type="entry name" value="RuvA_2-like"/>
</dbReference>
<dbReference type="InterPro" id="IPR001943">
    <property type="entry name" value="UVR_dom"/>
</dbReference>
<dbReference type="InterPro" id="IPR036876">
    <property type="entry name" value="UVR_dom_sf"/>
</dbReference>
<dbReference type="InterPro" id="IPR050066">
    <property type="entry name" value="UvrABC_protein_C"/>
</dbReference>
<dbReference type="InterPro" id="IPR004791">
    <property type="entry name" value="UvrC"/>
</dbReference>
<dbReference type="InterPro" id="IPR001162">
    <property type="entry name" value="UvrC_RNase_H_dom"/>
</dbReference>
<dbReference type="InterPro" id="IPR038476">
    <property type="entry name" value="UvrC_RNase_H_dom_sf"/>
</dbReference>
<dbReference type="NCBIfam" id="NF001824">
    <property type="entry name" value="PRK00558.1-5"/>
    <property type="match status" value="1"/>
</dbReference>
<dbReference type="NCBIfam" id="TIGR00194">
    <property type="entry name" value="uvrC"/>
    <property type="match status" value="1"/>
</dbReference>
<dbReference type="PANTHER" id="PTHR30562:SF1">
    <property type="entry name" value="UVRABC SYSTEM PROTEIN C"/>
    <property type="match status" value="1"/>
</dbReference>
<dbReference type="PANTHER" id="PTHR30562">
    <property type="entry name" value="UVRC/OXIDOREDUCTASE"/>
    <property type="match status" value="1"/>
</dbReference>
<dbReference type="Pfam" id="PF01541">
    <property type="entry name" value="GIY-YIG"/>
    <property type="match status" value="1"/>
</dbReference>
<dbReference type="Pfam" id="PF14520">
    <property type="entry name" value="HHH_5"/>
    <property type="match status" value="1"/>
</dbReference>
<dbReference type="Pfam" id="PF02151">
    <property type="entry name" value="UVR"/>
    <property type="match status" value="1"/>
</dbReference>
<dbReference type="Pfam" id="PF22920">
    <property type="entry name" value="UvrC_RNaseH"/>
    <property type="match status" value="1"/>
</dbReference>
<dbReference type="Pfam" id="PF08459">
    <property type="entry name" value="UvrC_RNaseH_dom"/>
    <property type="match status" value="1"/>
</dbReference>
<dbReference type="SMART" id="SM00465">
    <property type="entry name" value="GIYc"/>
    <property type="match status" value="1"/>
</dbReference>
<dbReference type="SMART" id="SM00278">
    <property type="entry name" value="HhH1"/>
    <property type="match status" value="2"/>
</dbReference>
<dbReference type="SUPFAM" id="SSF46600">
    <property type="entry name" value="C-terminal UvrC-binding domain of UvrB"/>
    <property type="match status" value="1"/>
</dbReference>
<dbReference type="SUPFAM" id="SSF82771">
    <property type="entry name" value="GIY-YIG endonuclease"/>
    <property type="match status" value="1"/>
</dbReference>
<dbReference type="SUPFAM" id="SSF47781">
    <property type="entry name" value="RuvA domain 2-like"/>
    <property type="match status" value="1"/>
</dbReference>
<dbReference type="PROSITE" id="PS50164">
    <property type="entry name" value="GIY_YIG"/>
    <property type="match status" value="1"/>
</dbReference>
<dbReference type="PROSITE" id="PS50151">
    <property type="entry name" value="UVR"/>
    <property type="match status" value="1"/>
</dbReference>
<dbReference type="PROSITE" id="PS50165">
    <property type="entry name" value="UVRC"/>
    <property type="match status" value="1"/>
</dbReference>
<reference key="1">
    <citation type="journal article" date="2007" name="Proc. Natl. Acad. Sci. U.S.A.">
        <title>Genome plasticity of BCG and impact on vaccine efficacy.</title>
        <authorList>
            <person name="Brosch R."/>
            <person name="Gordon S.V."/>
            <person name="Garnier T."/>
            <person name="Eiglmeier K."/>
            <person name="Frigui W."/>
            <person name="Valenti P."/>
            <person name="Dos Santos S."/>
            <person name="Duthoy S."/>
            <person name="Lacroix C."/>
            <person name="Garcia-Pelayo C."/>
            <person name="Inwald J.K."/>
            <person name="Golby P."/>
            <person name="Garcia J.N."/>
            <person name="Hewinson R.G."/>
            <person name="Behr M.A."/>
            <person name="Quail M.A."/>
            <person name="Churcher C."/>
            <person name="Barrell B.G."/>
            <person name="Parkhill J."/>
            <person name="Cole S.T."/>
        </authorList>
    </citation>
    <scope>NUCLEOTIDE SEQUENCE [LARGE SCALE GENOMIC DNA]</scope>
    <source>
        <strain>BCG / Pasteur 1173P2</strain>
    </source>
</reference>
<gene>
    <name evidence="1" type="primary">uvrC</name>
    <name type="ordered locus">BCG_1481</name>
</gene>
<feature type="chain" id="PRO_1000077807" description="UvrABC system protein C">
    <location>
        <begin position="1"/>
        <end position="646"/>
    </location>
</feature>
<feature type="domain" description="GIY-YIG" evidence="1">
    <location>
        <begin position="16"/>
        <end position="95"/>
    </location>
</feature>
<feature type="domain" description="UVR" evidence="1">
    <location>
        <begin position="208"/>
        <end position="243"/>
    </location>
</feature>